<comment type="function">
    <text evidence="1 4">May serve as a scaffold protein for MADD and RAB3GA on synaptic vesicles of neuronal and endocrine homeostatic processes (By similarity). Plays a role in the brain as a key controller of neuronal and endocrine homeostatic processes (PubMed:25248098).</text>
</comment>
<comment type="subunit">
    <text evidence="1">Interacts with MADD and RAB3GAP.</text>
</comment>
<comment type="subcellular location">
    <subcellularLocation>
        <location evidence="1">Cytoplasmic vesicle</location>
        <location evidence="1">Secretory vesicle</location>
        <location evidence="1">Synaptic vesicle membrane</location>
        <topology evidence="1">Peripheral membrane protein</topology>
    </subcellularLocation>
    <subcellularLocation>
        <location evidence="4">Cytoplasmic vesicle</location>
        <location evidence="4">Secretory vesicle</location>
        <location evidence="4">Neuronal dense core vesicle</location>
    </subcellularLocation>
    <text evidence="4">The external layer of the inferior boundary for the hypothalamus part of the human brain (the so called median eminence (ME)) displayed a punctate pattern of expression; expression also observed in the cell bodies lining the third ventricle, in the long processes extending from these cell bodies toward the external layer of the ME, in small clear vesicles, and in large dense core vesicles.</text>
</comment>
<comment type="alternative products">
    <event type="alternative splicing"/>
    <isoform>
        <id>Q8BPN8-1</id>
        <name>1</name>
        <sequence type="displayed"/>
    </isoform>
    <isoform>
        <id>Q8BPN8-2</id>
        <name>2</name>
        <sequence type="described" ref="VSP_026596 VSP_026597"/>
    </isoform>
    <isoform>
        <id>Q8BPN8-3</id>
        <name>3</name>
        <sequence type="described" ref="VSP_026594 VSP_026595"/>
    </isoform>
</comment>
<comment type="tissue specificity">
    <text evidence="4 5">Expressed in the brain and pituitary gland. Detected in the hippocampus, dentate gyrus, hypothalamus, pyriform cortex and the granular and molecular layers of the cerebellum of adult animals. In the hypothalamus, expression is observed in the arcuate nucleus, the ME, the organum vasculosum of the lamina terminalis, and the subfornical organ, the subcommissural organ, and the suprachiasmatic nucleus. Both tanycytes and hypothalamic neurosecretory neurons express the protein (PubMed:25248098). Expressed in the inner and outer hair cells as well as in the spiral ganglion neurons (PubMed:27657680). Expressed in insulin-secreting cells of the islets of Langerhans in the pancreas (PubMed:25248098).</text>
</comment>
<comment type="disruption phenotype">
    <text evidence="4">Conditional heterozygous deletion of the gene in neurons causes delayed puberty as well as very low fertility; the reproductive phenotype is associated with a reduced number of GnRH neurons in the hypothalamus of adult mice. Animals with a homozygous deletion of the gene die during embryonic development.</text>
</comment>
<proteinExistence type="evidence at protein level"/>
<name>DMXL2_MOUSE</name>
<organism>
    <name type="scientific">Mus musculus</name>
    <name type="common">Mouse</name>
    <dbReference type="NCBI Taxonomy" id="10090"/>
    <lineage>
        <taxon>Eukaryota</taxon>
        <taxon>Metazoa</taxon>
        <taxon>Chordata</taxon>
        <taxon>Craniata</taxon>
        <taxon>Vertebrata</taxon>
        <taxon>Euteleostomi</taxon>
        <taxon>Mammalia</taxon>
        <taxon>Eutheria</taxon>
        <taxon>Euarchontoglires</taxon>
        <taxon>Glires</taxon>
        <taxon>Rodentia</taxon>
        <taxon>Myomorpha</taxon>
        <taxon>Muroidea</taxon>
        <taxon>Muridae</taxon>
        <taxon>Murinae</taxon>
        <taxon>Mus</taxon>
        <taxon>Mus</taxon>
    </lineage>
</organism>
<protein>
    <recommendedName>
        <fullName>DmX-like protein 2</fullName>
    </recommendedName>
    <alternativeName>
        <fullName>Rabconnectin-3</fullName>
    </alternativeName>
</protein>
<dbReference type="EMBL" id="AK032099">
    <property type="protein sequence ID" value="BAC27698.1"/>
    <property type="molecule type" value="mRNA"/>
</dbReference>
<dbReference type="EMBL" id="AK053672">
    <property type="protein sequence ID" value="BAC35468.2"/>
    <property type="molecule type" value="mRNA"/>
</dbReference>
<dbReference type="EMBL" id="AK164884">
    <property type="protein sequence ID" value="BAE37952.1"/>
    <property type="molecule type" value="mRNA"/>
</dbReference>
<dbReference type="EMBL" id="AC161589">
    <property type="status" value="NOT_ANNOTATED_CDS"/>
    <property type="molecule type" value="Genomic_DNA"/>
</dbReference>
<dbReference type="EMBL" id="CT010507">
    <property type="status" value="NOT_ANNOTATED_CDS"/>
    <property type="molecule type" value="Genomic_DNA"/>
</dbReference>
<dbReference type="EMBL" id="AK173043">
    <property type="protein sequence ID" value="BAD32321.1"/>
    <property type="molecule type" value="Transcribed_RNA"/>
</dbReference>
<dbReference type="RefSeq" id="XP_006511148.2">
    <molecule id="Q8BPN8-1"/>
    <property type="nucleotide sequence ID" value="XM_006511085.4"/>
</dbReference>
<dbReference type="FunCoup" id="Q8BPN8">
    <property type="interactions" value="1669"/>
</dbReference>
<dbReference type="IntAct" id="Q8BPN8">
    <property type="interactions" value="15"/>
</dbReference>
<dbReference type="MINT" id="Q8BPN8"/>
<dbReference type="STRING" id="10090.ENSMUSP00000113705"/>
<dbReference type="GlyGen" id="Q8BPN8">
    <property type="glycosylation" value="3 sites, 1 N-linked glycan (1 site), 1 O-linked glycan (1 site)"/>
</dbReference>
<dbReference type="iPTMnet" id="Q8BPN8"/>
<dbReference type="MetOSite" id="Q8BPN8"/>
<dbReference type="PhosphoSitePlus" id="Q8BPN8"/>
<dbReference type="SwissPalm" id="Q8BPN8"/>
<dbReference type="PaxDb" id="10090-ENSMUSP00000113705"/>
<dbReference type="PeptideAtlas" id="Q8BPN8"/>
<dbReference type="ProteomicsDB" id="279790">
    <molecule id="Q8BPN8-1"/>
</dbReference>
<dbReference type="ProteomicsDB" id="279791">
    <molecule id="Q8BPN8-2"/>
</dbReference>
<dbReference type="ProteomicsDB" id="279792">
    <molecule id="Q8BPN8-3"/>
</dbReference>
<dbReference type="Antibodypedia" id="51332">
    <property type="antibodies" value="53 antibodies from 15 providers"/>
</dbReference>
<dbReference type="Ensembl" id="ENSMUST00000118600.8">
    <molecule id="Q8BPN8-1"/>
    <property type="protein sequence ID" value="ENSMUSP00000113693.2"/>
    <property type="gene ID" value="ENSMUSG00000041268.18"/>
</dbReference>
<dbReference type="GeneID" id="235380"/>
<dbReference type="UCSC" id="uc009prb.1">
    <molecule id="Q8BPN8-3"/>
    <property type="organism name" value="mouse"/>
</dbReference>
<dbReference type="AGR" id="MGI:2444630"/>
<dbReference type="CTD" id="23312"/>
<dbReference type="MGI" id="MGI:2444630">
    <property type="gene designation" value="Dmxl2"/>
</dbReference>
<dbReference type="VEuPathDB" id="HostDB:ENSMUSG00000041268"/>
<dbReference type="eggNOG" id="KOG1064">
    <property type="taxonomic scope" value="Eukaryota"/>
</dbReference>
<dbReference type="GeneTree" id="ENSGT00390000000096"/>
<dbReference type="HOGENOM" id="CLU_000267_0_0_1"/>
<dbReference type="InParanoid" id="Q8BPN8"/>
<dbReference type="PhylomeDB" id="Q8BPN8"/>
<dbReference type="BioGRID-ORCS" id="235380">
    <property type="hits" value="2 hits in 77 CRISPR screens"/>
</dbReference>
<dbReference type="CD-CODE" id="CE726F99">
    <property type="entry name" value="Postsynaptic density"/>
</dbReference>
<dbReference type="ChiTaRS" id="Dmxl2">
    <property type="organism name" value="mouse"/>
</dbReference>
<dbReference type="PRO" id="PR:Q8BPN8"/>
<dbReference type="Proteomes" id="UP000000589">
    <property type="component" value="Chromosome 9"/>
</dbReference>
<dbReference type="RNAct" id="Q8BPN8">
    <property type="molecule type" value="protein"/>
</dbReference>
<dbReference type="Bgee" id="ENSMUSG00000041268">
    <property type="expression patterns" value="Expressed in superior cervical ganglion and 231 other cell types or tissues"/>
</dbReference>
<dbReference type="ExpressionAtlas" id="Q8BPN8">
    <property type="expression patterns" value="baseline and differential"/>
</dbReference>
<dbReference type="GO" id="GO:0098992">
    <property type="term" value="C:neuronal dense core vesicle"/>
    <property type="evidence" value="ECO:0000314"/>
    <property type="project" value="SynGO"/>
</dbReference>
<dbReference type="GO" id="GO:0008021">
    <property type="term" value="C:synaptic vesicle"/>
    <property type="evidence" value="ECO:0000266"/>
    <property type="project" value="MGI"/>
</dbReference>
<dbReference type="GO" id="GO:0030672">
    <property type="term" value="C:synaptic vesicle membrane"/>
    <property type="evidence" value="ECO:0007669"/>
    <property type="project" value="UniProtKB-SubCell"/>
</dbReference>
<dbReference type="GO" id="GO:0031267">
    <property type="term" value="F:small GTPase binding"/>
    <property type="evidence" value="ECO:0000266"/>
    <property type="project" value="MGI"/>
</dbReference>
<dbReference type="GO" id="GO:0007420">
    <property type="term" value="P:brain development"/>
    <property type="evidence" value="ECO:0000315"/>
    <property type="project" value="MGI"/>
</dbReference>
<dbReference type="GO" id="GO:0007268">
    <property type="term" value="P:chemical synaptic transmission"/>
    <property type="evidence" value="ECO:0000315"/>
    <property type="project" value="MGI"/>
</dbReference>
<dbReference type="GO" id="GO:0022038">
    <property type="term" value="P:corpus callosum development"/>
    <property type="evidence" value="ECO:0000315"/>
    <property type="project" value="MGI"/>
</dbReference>
<dbReference type="GO" id="GO:0042593">
    <property type="term" value="P:glucose homeostasis"/>
    <property type="evidence" value="ECO:0000315"/>
    <property type="project" value="MGI"/>
</dbReference>
<dbReference type="GO" id="GO:0007608">
    <property type="term" value="P:sensory perception of smell"/>
    <property type="evidence" value="ECO:0000315"/>
    <property type="project" value="MGI"/>
</dbReference>
<dbReference type="GO" id="GO:0007283">
    <property type="term" value="P:spermatogenesis"/>
    <property type="evidence" value="ECO:0000315"/>
    <property type="project" value="MGI"/>
</dbReference>
<dbReference type="FunFam" id="2.130.10.10:FF:000150">
    <property type="entry name" value="Dmx-like 2, isoform CRA_c"/>
    <property type="match status" value="1"/>
</dbReference>
<dbReference type="FunFam" id="2.130.10.10:FF:000254">
    <property type="entry name" value="dmX-like protein 2 isoform X2"/>
    <property type="match status" value="1"/>
</dbReference>
<dbReference type="Gene3D" id="2.130.10.10">
    <property type="entry name" value="YVTN repeat-like/Quinoprotein amine dehydrogenase"/>
    <property type="match status" value="3"/>
</dbReference>
<dbReference type="InterPro" id="IPR052208">
    <property type="entry name" value="DmX-like/RAVE_component"/>
</dbReference>
<dbReference type="InterPro" id="IPR022033">
    <property type="entry name" value="Rav1p_C"/>
</dbReference>
<dbReference type="InterPro" id="IPR015943">
    <property type="entry name" value="WD40/YVTN_repeat-like_dom_sf"/>
</dbReference>
<dbReference type="InterPro" id="IPR036322">
    <property type="entry name" value="WD40_repeat_dom_sf"/>
</dbReference>
<dbReference type="InterPro" id="IPR001680">
    <property type="entry name" value="WD40_rpt"/>
</dbReference>
<dbReference type="PANTHER" id="PTHR13950:SF13">
    <property type="entry name" value="DMX-LIKE PROTEIN 2"/>
    <property type="match status" value="1"/>
</dbReference>
<dbReference type="PANTHER" id="PTHR13950">
    <property type="entry name" value="RABCONNECTIN-RELATED"/>
    <property type="match status" value="1"/>
</dbReference>
<dbReference type="Pfam" id="PF12234">
    <property type="entry name" value="Rav1p_C"/>
    <property type="match status" value="2"/>
</dbReference>
<dbReference type="Pfam" id="PF00400">
    <property type="entry name" value="WD40"/>
    <property type="match status" value="2"/>
</dbReference>
<dbReference type="SMART" id="SM00320">
    <property type="entry name" value="WD40"/>
    <property type="match status" value="13"/>
</dbReference>
<dbReference type="SUPFAM" id="SSF50978">
    <property type="entry name" value="WD40 repeat-like"/>
    <property type="match status" value="2"/>
</dbReference>
<dbReference type="PROSITE" id="PS50082">
    <property type="entry name" value="WD_REPEATS_2"/>
    <property type="match status" value="2"/>
</dbReference>
<dbReference type="PROSITE" id="PS50294">
    <property type="entry name" value="WD_REPEATS_REGION"/>
    <property type="match status" value="1"/>
</dbReference>
<evidence type="ECO:0000250" key="1">
    <source>
        <dbReference type="UniProtKB" id="Q8TDJ6"/>
    </source>
</evidence>
<evidence type="ECO:0000255" key="2"/>
<evidence type="ECO:0000256" key="3">
    <source>
        <dbReference type="SAM" id="MobiDB-lite"/>
    </source>
</evidence>
<evidence type="ECO:0000269" key="4">
    <source>
    </source>
</evidence>
<evidence type="ECO:0000269" key="5">
    <source>
    </source>
</evidence>
<evidence type="ECO:0000303" key="6">
    <source>
    </source>
</evidence>
<evidence type="ECO:0000303" key="7">
    <source>
    </source>
</evidence>
<evidence type="ECO:0000305" key="8"/>
<evidence type="ECO:0007744" key="9">
    <source>
    </source>
</evidence>
<accession>Q8BPN8</accession>
<accession>B0V2P4</accession>
<accession>Q3TNY5</accession>
<accession>Q69ZX5</accession>
<accession>Q8CCU3</accession>
<feature type="chain" id="PRO_0000223325" description="DmX-like protein 2">
    <location>
        <begin position="1"/>
        <end position="3032"/>
    </location>
</feature>
<feature type="repeat" description="WD 1">
    <location>
        <begin position="108"/>
        <end position="145"/>
    </location>
</feature>
<feature type="repeat" description="WD 2">
    <location>
        <begin position="167"/>
        <end position="207"/>
    </location>
</feature>
<feature type="repeat" description="WD 3">
    <location>
        <begin position="230"/>
        <end position="278"/>
    </location>
</feature>
<feature type="repeat" description="WD 4">
    <location>
        <begin position="492"/>
        <end position="532"/>
    </location>
</feature>
<feature type="repeat" description="WD 5">
    <location>
        <begin position="594"/>
        <end position="633"/>
    </location>
</feature>
<feature type="repeat" description="WD 6">
    <location>
        <begin position="750"/>
        <end position="802"/>
    </location>
</feature>
<feature type="repeat" description="WD 7">
    <location>
        <begin position="879"/>
        <end position="921"/>
    </location>
</feature>
<feature type="repeat" description="WD 8">
    <location>
        <begin position="1001"/>
        <end position="1038"/>
    </location>
</feature>
<feature type="repeat" description="WD 9">
    <location>
        <begin position="1164"/>
        <end position="1205"/>
    </location>
</feature>
<feature type="repeat" description="WD 10">
    <location>
        <begin position="1245"/>
        <end position="1285"/>
    </location>
</feature>
<feature type="repeat" description="WD 11">
    <location>
        <begin position="2757"/>
        <end position="2796"/>
    </location>
</feature>
<feature type="repeat" description="WD 12">
    <location>
        <begin position="2800"/>
        <end position="2839"/>
    </location>
</feature>
<feature type="repeat" description="WD 13">
    <location>
        <begin position="2846"/>
        <end position="2888"/>
    </location>
</feature>
<feature type="repeat" description="WD 14">
    <location>
        <begin position="2894"/>
        <end position="2933"/>
    </location>
</feature>
<feature type="repeat" description="WD 15">
    <location>
        <begin position="2936"/>
        <end position="2975"/>
    </location>
</feature>
<feature type="repeat" description="WD 16">
    <location>
        <begin position="2988"/>
        <end position="3026"/>
    </location>
</feature>
<feature type="region of interest" description="Disordered" evidence="3">
    <location>
        <begin position="418"/>
        <end position="486"/>
    </location>
</feature>
<feature type="region of interest" description="Disordered" evidence="3">
    <location>
        <begin position="577"/>
        <end position="598"/>
    </location>
</feature>
<feature type="region of interest" description="Disordered" evidence="3">
    <location>
        <begin position="937"/>
        <end position="958"/>
    </location>
</feature>
<feature type="region of interest" description="Disordered" evidence="3">
    <location>
        <begin position="1443"/>
        <end position="1464"/>
    </location>
</feature>
<feature type="region of interest" description="Disordered" evidence="3">
    <location>
        <begin position="1922"/>
        <end position="1953"/>
    </location>
</feature>
<feature type="region of interest" description="Disordered" evidence="3">
    <location>
        <begin position="2722"/>
        <end position="2744"/>
    </location>
</feature>
<feature type="coiled-coil region" evidence="2">
    <location>
        <begin position="2117"/>
        <end position="2146"/>
    </location>
</feature>
<feature type="compositionally biased region" description="Acidic residues" evidence="3">
    <location>
        <begin position="422"/>
        <end position="434"/>
    </location>
</feature>
<feature type="compositionally biased region" description="Basic and acidic residues" evidence="3">
    <location>
        <begin position="435"/>
        <end position="474"/>
    </location>
</feature>
<feature type="compositionally biased region" description="Polar residues" evidence="3">
    <location>
        <begin position="589"/>
        <end position="598"/>
    </location>
</feature>
<feature type="compositionally biased region" description="Low complexity" evidence="3">
    <location>
        <begin position="945"/>
        <end position="958"/>
    </location>
</feature>
<feature type="compositionally biased region" description="Basic and acidic residues" evidence="3">
    <location>
        <begin position="1444"/>
        <end position="1461"/>
    </location>
</feature>
<feature type="compositionally biased region" description="Low complexity" evidence="3">
    <location>
        <begin position="2722"/>
        <end position="2732"/>
    </location>
</feature>
<feature type="modified residue" description="Phosphoserine" evidence="9">
    <location>
        <position position="326"/>
    </location>
</feature>
<feature type="modified residue" description="Phosphoserine" evidence="1">
    <location>
        <position position="473"/>
    </location>
</feature>
<feature type="modified residue" description="Phosphoserine" evidence="9">
    <location>
        <position position="587"/>
    </location>
</feature>
<feature type="modified residue" description="Phosphoserine" evidence="9">
    <location>
        <position position="945"/>
    </location>
</feature>
<feature type="modified residue" description="Phosphoserine" evidence="9">
    <location>
        <position position="946"/>
    </location>
</feature>
<feature type="modified residue" description="Phosphoserine" evidence="9">
    <location>
        <position position="1141"/>
    </location>
</feature>
<feature type="modified residue" description="Phosphoserine" evidence="9">
    <location>
        <position position="1144"/>
    </location>
</feature>
<feature type="modified residue" description="Phosphoserine" evidence="1">
    <location>
        <position position="1152"/>
    </location>
</feature>
<feature type="modified residue" description="Phosphoserine" evidence="9">
    <location>
        <position position="1288"/>
    </location>
</feature>
<feature type="modified residue" description="Phosphoserine" evidence="1">
    <location>
        <position position="1399"/>
    </location>
</feature>
<feature type="modified residue" description="Phosphothreonine" evidence="9">
    <location>
        <position position="1416"/>
    </location>
</feature>
<feature type="modified residue" description="Phosphoserine" evidence="9">
    <location>
        <position position="1856"/>
    </location>
</feature>
<feature type="modified residue" description="Phosphothreonine" evidence="9">
    <location>
        <position position="2017"/>
    </location>
</feature>
<feature type="modified residue" description="Phosphoserine" evidence="9">
    <location>
        <position position="2394"/>
    </location>
</feature>
<feature type="modified residue" description="Phosphoserine" evidence="9">
    <location>
        <position position="2636"/>
    </location>
</feature>
<feature type="splice variant" id="VSP_026594" description="In isoform 3." evidence="7">
    <original>AKAAEGISSDS</original>
    <variation>GKKLYCYFIQR</variation>
    <location>
        <begin position="923"/>
        <end position="933"/>
    </location>
</feature>
<feature type="splice variant" id="VSP_026595" description="In isoform 3." evidence="7">
    <location>
        <begin position="934"/>
        <end position="3032"/>
    </location>
</feature>
<feature type="splice variant" id="VSP_026596" description="In isoform 2." evidence="6">
    <original>Y</original>
    <variation>YS</variation>
    <location>
        <position position="2272"/>
    </location>
</feature>
<feature type="splice variant" id="VSP_026597" description="In isoform 2." evidence="6">
    <location>
        <begin position="2488"/>
        <end position="2498"/>
    </location>
</feature>
<feature type="sequence conflict" description="In Ref. 1; BAC35468." evidence="8" ref="1">
    <original>L</original>
    <variation>P</variation>
    <location>
        <position position="655"/>
    </location>
</feature>
<sequence>MHLHQVLTGAVNPGDNCYSVGSVGDVPFTAYGSGCDIVILASDFECVQIIPGAKHGNIQVSCVECSNQHGRVAASYGNAVCIFEPLGVNSHKRNSQLKCQWLKTGQFFLSSVTYNLAWDPQDNRLLTATDSIQLWAPPGGDILEEEEDVDNRAPPVLNDWKCIWQCKTSVSVHLMEWSPDGEYFATAGKDDCLLKVWYPMTGWKSSIIPQDPHEVKRRRASTQFSFVYLAHPRAVTGFSWRKTSKYMPRGSVCNVLLTSCHDGVCRLWAETLLPEDCLLGEQICETTTSSVASNLSSAGKHKDRIQHALETIHHLKNLRKGQRRSSVLVTHAELMPDKTATHEVHRHISHHANALCHFHIAASINPTTDIPNVLVGTAFNIDDINGGFVVHWLNNKEFHFTSSTEIFMHQLRKLSEKQLDHESDDADREDEERSQDERERGLRMKLDHELSLDRESEAGTGSSEHEDGEREGSPRTHPRPSISMPLPTVLLDRKIETLLTEWNKNPDMLFTIHPVDGTFLVWHVKYLDEYNPGIFRQVQVSFSSRIPVAFPSGDANSLSKNIMMYACVNATKDSYNPSQQEMMSVDSPHGSQLHSPSHSTDMNILAPTVMMVSKHIDGSLNQWAVTFADKSAFTTVLTVSHKFRYCGHRFHLNDLACHSVLPLLLTSSHHNALLTPESDCQWDSDSKVNRLIDPVKHTKASSKQPLRNAATRTFHDPNAIYSELILWRVDPIGPLSYTGGVSELARINSLHTSAFSNVAWLPTLIPSYCLGTYCNSASACFVASDGKNLRLYQAVVDARKLLDELSDPEASKLIGEVFNIVSQQSTARPGCIIELDAITDQCGSNTQLLHVFQEDFIIGYKPHKEDMEKKEKESEIFFQPSQGYRPPPFSEKFFLVVIEKDGNNNSILHMWHLHLKSVQACLAKAAEGISSDSLLSVPGQKNLDSSPETSSSMSSVPHSSSIANLQTASKLILSSRLVYSQPLDLPEAVEVIRATPSAGHLSSSSIYPVCLAPYLVVTTCSDNKVRFWKCCMETNSLGNTSDESETYHWRRWPLMNDEGEDNSSTVSIVGRPVAVSCSYTGRLAVAYKQPIHHNGFISKEFSMHVCIFECESTGGSEWVLEQTIHLDDLVKVGSVLDSRVSVDSNLFVYSKSDAFLSKDRYLIPNIKHLVHLDWVSKEDGSHILTVGVGANIFMYGRLSGIVSDQTNSKDGVAVITLPLGGSIKQGVKSRWVLLRSIDLVSSVDGTPSLPVSLSWVRDGILVVGMDCEMHVYAQWKHSVKFGNVDADSPVEETIQDHSALKSSMLARKSIVEGAAIPDDVFCSPTVVQDGGLFEAAHALSPTLPQYHPTQLLELMDLGKVRRAKAILSHLVKCIAGEVAIVRDPDAGEGTKRHLSRTISVSGSTAKDTVTIGKDGTRDYTEIDSIPPLPLHALLAADQDTSYRISEDSTKKPQSYEDHIESQSEDQYSELFQVQEITTDDIDLEPEKRENKSKVINLSQYGPACFGQEHARVLSSHLMHSSLPGLTRLEQMFLVALADTVATTSTELDENRDKNYSGRDTLDECGLRYLLAMRLHTCLLTSLPPLYRVQLLHQGVSTCHFAWAFHSEAEEELINMIPAIQRGDPQWSELRAMGIGWWVRNVNTLRRCIEKVAKAAFQRNNEALDAALFYLSMKKKAVVWGLFRSQHDEKMTTFFSHNFNEDRWRKAALKNAFSLLGKQRFEQSAAFFLLAGSLKDAIEVCLEKMEDIQLAMVIARLFESEFETSSTYISILNQKILGCQKDGTGFDCKRLHPDPFLRSLAYWVVKDYTRALDTLLEQTPKEDDEQQVIIKSCNPVVFSFYNYLRTHPLLIRRNLASPEGTLATLGLKTEKNIADKINLIERKLFFTTANAHFKVGCPVLALEVLSKIPKVTKISSLTAKKDQLDSVSGRMENGPSESKPVSRSDGGSGADWSAVTSSQFDWSQPMVTVDEEPLRLDWGDDHDGALEEDDGGGLVMKTTDAKKAGQEQSASDPRALLTPQDEECADGDTEVDVIAEQLKFRACLKILMTELRTLATGYEVDGGKLRFQLYNWLEKEIAALHEICNHESVIKEYSSKAHSTVETERLDQEEMVDKPDIGSYERHQIERRRLQAKREHAERRKLWLQKNQDLLRVFLSYCSLHGAQGGGLASVRMELKFLLQESQQETTVKQLQSPLPLPTTLPLLSASIASTKTVIANPVLYLNNHIHDILYTIVQMKTPPHPSVEDVKVHTLHSLAASLSASIYQALCDSHSYSQSEGNQFTGMAYQGLLLSDRRRLRTESIEEHATPNSAPAQWPGVSSLINLLSSAQDEDQPKLNVLLCEAVVAVYLSLLIHALATNSSNELFRLAAHPLNNRMWAAVFGGGVKLVVKPRRQSESIAAPPVASEDMDKHRRRFNMRMLVPGRPVKDATPPPVPAERPSYKEKFIPPELSMWDYFVAKPFLPLSDSGVIYDSDESVHSDDEEDDAFFSDTQIQEHQDPNSYSWALLHLTMVKLALHNIKNFFPIAGLEFSELPVTSPLGIAVIKNLENWEQILQEKMDHFEGPPPNYVNTYPTDLSVGAGPAILRNKAMLEPENTPFKSRDSSALPVKRLWHFLVKQEVLQETFIRYIFTKKRKQSEVEADLGYPGGKAKVIHKESDMIMAFSINKANCNEIVLASTHDVQELDVTSLLACQSYIWIGEEYDRESKSSDDIDYRGSTTTLYQPGAASHSSSQPHPPPSLPWLGSGQTSTGATVLMKRNLHNVKRMTSHPVHQYYLTGAQDGSVRMFEWTRPQQLVCFRQAGNARVTRLYFNSQGNKCGVADGEGFLSIWQVNQTASNPKPYMSWQCHSKATSDFAFITSSSLVATSGHSNDNRNVCLWDTLISPGNSLIHGFTCHDHGATVLQYAPKQQLLISGGRKGYICIFDIRQRQLIHTFQAHDSAIKALALDSCEEYFTTGSAEGNIKVWRLTGHGLIHSFKSEHAKQSIFRNIGAGVMQIAISQDNRLFSCGADGTLKTRVLPSAFNIPNRILDIL</sequence>
<gene>
    <name type="primary">Dmxl2</name>
    <name type="synonym">Kiaa0856</name>
</gene>
<keyword id="KW-0025">Alternative splicing</keyword>
<keyword id="KW-0175">Coiled coil</keyword>
<keyword id="KW-0968">Cytoplasmic vesicle</keyword>
<keyword id="KW-0472">Membrane</keyword>
<keyword id="KW-0597">Phosphoprotein</keyword>
<keyword id="KW-1185">Reference proteome</keyword>
<keyword id="KW-0677">Repeat</keyword>
<keyword id="KW-0770">Synapse</keyword>
<keyword id="KW-0853">WD repeat</keyword>
<reference key="1">
    <citation type="journal article" date="2005" name="Science">
        <title>The transcriptional landscape of the mammalian genome.</title>
        <authorList>
            <person name="Carninci P."/>
            <person name="Kasukawa T."/>
            <person name="Katayama S."/>
            <person name="Gough J."/>
            <person name="Frith M.C."/>
            <person name="Maeda N."/>
            <person name="Oyama R."/>
            <person name="Ravasi T."/>
            <person name="Lenhard B."/>
            <person name="Wells C."/>
            <person name="Kodzius R."/>
            <person name="Shimokawa K."/>
            <person name="Bajic V.B."/>
            <person name="Brenner S.E."/>
            <person name="Batalov S."/>
            <person name="Forrest A.R."/>
            <person name="Zavolan M."/>
            <person name="Davis M.J."/>
            <person name="Wilming L.G."/>
            <person name="Aidinis V."/>
            <person name="Allen J.E."/>
            <person name="Ambesi-Impiombato A."/>
            <person name="Apweiler R."/>
            <person name="Aturaliya R.N."/>
            <person name="Bailey T.L."/>
            <person name="Bansal M."/>
            <person name="Baxter L."/>
            <person name="Beisel K.W."/>
            <person name="Bersano T."/>
            <person name="Bono H."/>
            <person name="Chalk A.M."/>
            <person name="Chiu K.P."/>
            <person name="Choudhary V."/>
            <person name="Christoffels A."/>
            <person name="Clutterbuck D.R."/>
            <person name="Crowe M.L."/>
            <person name="Dalla E."/>
            <person name="Dalrymple B.P."/>
            <person name="de Bono B."/>
            <person name="Della Gatta G."/>
            <person name="di Bernardo D."/>
            <person name="Down T."/>
            <person name="Engstrom P."/>
            <person name="Fagiolini M."/>
            <person name="Faulkner G."/>
            <person name="Fletcher C.F."/>
            <person name="Fukushima T."/>
            <person name="Furuno M."/>
            <person name="Futaki S."/>
            <person name="Gariboldi M."/>
            <person name="Georgii-Hemming P."/>
            <person name="Gingeras T.R."/>
            <person name="Gojobori T."/>
            <person name="Green R.E."/>
            <person name="Gustincich S."/>
            <person name="Harbers M."/>
            <person name="Hayashi Y."/>
            <person name="Hensch T.K."/>
            <person name="Hirokawa N."/>
            <person name="Hill D."/>
            <person name="Huminiecki L."/>
            <person name="Iacono M."/>
            <person name="Ikeo K."/>
            <person name="Iwama A."/>
            <person name="Ishikawa T."/>
            <person name="Jakt M."/>
            <person name="Kanapin A."/>
            <person name="Katoh M."/>
            <person name="Kawasawa Y."/>
            <person name="Kelso J."/>
            <person name="Kitamura H."/>
            <person name="Kitano H."/>
            <person name="Kollias G."/>
            <person name="Krishnan S.P."/>
            <person name="Kruger A."/>
            <person name="Kummerfeld S.K."/>
            <person name="Kurochkin I.V."/>
            <person name="Lareau L.F."/>
            <person name="Lazarevic D."/>
            <person name="Lipovich L."/>
            <person name="Liu J."/>
            <person name="Liuni S."/>
            <person name="McWilliam S."/>
            <person name="Madan Babu M."/>
            <person name="Madera M."/>
            <person name="Marchionni L."/>
            <person name="Matsuda H."/>
            <person name="Matsuzawa S."/>
            <person name="Miki H."/>
            <person name="Mignone F."/>
            <person name="Miyake S."/>
            <person name="Morris K."/>
            <person name="Mottagui-Tabar S."/>
            <person name="Mulder N."/>
            <person name="Nakano N."/>
            <person name="Nakauchi H."/>
            <person name="Ng P."/>
            <person name="Nilsson R."/>
            <person name="Nishiguchi S."/>
            <person name="Nishikawa S."/>
            <person name="Nori F."/>
            <person name="Ohara O."/>
            <person name="Okazaki Y."/>
            <person name="Orlando V."/>
            <person name="Pang K.C."/>
            <person name="Pavan W.J."/>
            <person name="Pavesi G."/>
            <person name="Pesole G."/>
            <person name="Petrovsky N."/>
            <person name="Piazza S."/>
            <person name="Reed J."/>
            <person name="Reid J.F."/>
            <person name="Ring B.Z."/>
            <person name="Ringwald M."/>
            <person name="Rost B."/>
            <person name="Ruan Y."/>
            <person name="Salzberg S.L."/>
            <person name="Sandelin A."/>
            <person name="Schneider C."/>
            <person name="Schoenbach C."/>
            <person name="Sekiguchi K."/>
            <person name="Semple C.A."/>
            <person name="Seno S."/>
            <person name="Sessa L."/>
            <person name="Sheng Y."/>
            <person name="Shibata Y."/>
            <person name="Shimada H."/>
            <person name="Shimada K."/>
            <person name="Silva D."/>
            <person name="Sinclair B."/>
            <person name="Sperling S."/>
            <person name="Stupka E."/>
            <person name="Sugiura K."/>
            <person name="Sultana R."/>
            <person name="Takenaka Y."/>
            <person name="Taki K."/>
            <person name="Tammoja K."/>
            <person name="Tan S.L."/>
            <person name="Tang S."/>
            <person name="Taylor M.S."/>
            <person name="Tegner J."/>
            <person name="Teichmann S.A."/>
            <person name="Ueda H.R."/>
            <person name="van Nimwegen E."/>
            <person name="Verardo R."/>
            <person name="Wei C.L."/>
            <person name="Yagi K."/>
            <person name="Yamanishi H."/>
            <person name="Zabarovsky E."/>
            <person name="Zhu S."/>
            <person name="Zimmer A."/>
            <person name="Hide W."/>
            <person name="Bult C."/>
            <person name="Grimmond S.M."/>
            <person name="Teasdale R.D."/>
            <person name="Liu E.T."/>
            <person name="Brusic V."/>
            <person name="Quackenbush J."/>
            <person name="Wahlestedt C."/>
            <person name="Mattick J.S."/>
            <person name="Hume D.A."/>
            <person name="Kai C."/>
            <person name="Sasaki D."/>
            <person name="Tomaru Y."/>
            <person name="Fukuda S."/>
            <person name="Kanamori-Katayama M."/>
            <person name="Suzuki M."/>
            <person name="Aoki J."/>
            <person name="Arakawa T."/>
            <person name="Iida J."/>
            <person name="Imamura K."/>
            <person name="Itoh M."/>
            <person name="Kato T."/>
            <person name="Kawaji H."/>
            <person name="Kawagashira N."/>
            <person name="Kawashima T."/>
            <person name="Kojima M."/>
            <person name="Kondo S."/>
            <person name="Konno H."/>
            <person name="Nakano K."/>
            <person name="Ninomiya N."/>
            <person name="Nishio T."/>
            <person name="Okada M."/>
            <person name="Plessy C."/>
            <person name="Shibata K."/>
            <person name="Shiraki T."/>
            <person name="Suzuki S."/>
            <person name="Tagami M."/>
            <person name="Waki K."/>
            <person name="Watahiki A."/>
            <person name="Okamura-Oho Y."/>
            <person name="Suzuki H."/>
            <person name="Kawai J."/>
            <person name="Hayashizaki Y."/>
        </authorList>
    </citation>
    <scope>NUCLEOTIDE SEQUENCE [LARGE SCALE MRNA] (ISOFORM 3)</scope>
    <scope>NUCLEOTIDE SEQUENCE [LARGE SCALE MRNA] OF 1-1485 (ISOFORM 1)</scope>
    <source>
        <strain>C57BL/6J</strain>
        <tissue>Eye</tissue>
        <tissue>Head</tissue>
        <tissue>Medulla oblongata</tissue>
    </source>
</reference>
<reference key="2">
    <citation type="journal article" date="2009" name="PLoS Biol.">
        <title>Lineage-specific biology revealed by a finished genome assembly of the mouse.</title>
        <authorList>
            <person name="Church D.M."/>
            <person name="Goodstadt L."/>
            <person name="Hillier L.W."/>
            <person name="Zody M.C."/>
            <person name="Goldstein S."/>
            <person name="She X."/>
            <person name="Bult C.J."/>
            <person name="Agarwala R."/>
            <person name="Cherry J.L."/>
            <person name="DiCuccio M."/>
            <person name="Hlavina W."/>
            <person name="Kapustin Y."/>
            <person name="Meric P."/>
            <person name="Maglott D."/>
            <person name="Birtle Z."/>
            <person name="Marques A.C."/>
            <person name="Graves T."/>
            <person name="Zhou S."/>
            <person name="Teague B."/>
            <person name="Potamousis K."/>
            <person name="Churas C."/>
            <person name="Place M."/>
            <person name="Herschleb J."/>
            <person name="Runnheim R."/>
            <person name="Forrest D."/>
            <person name="Amos-Landgraf J."/>
            <person name="Schwartz D.C."/>
            <person name="Cheng Z."/>
            <person name="Lindblad-Toh K."/>
            <person name="Eichler E.E."/>
            <person name="Ponting C.P."/>
        </authorList>
    </citation>
    <scope>NUCLEOTIDE SEQUENCE [LARGE SCALE GENOMIC DNA]</scope>
    <source>
        <strain>C57BL/6J</strain>
    </source>
</reference>
<reference key="3">
    <citation type="journal article" date="2004" name="DNA Res.">
        <title>Prediction of the coding sequences of mouse homologues of KIAA gene: IV. The complete nucleotide sequences of 500 mouse KIAA-homologous cDNAs identified by screening of terminal sequences of cDNA clones randomly sampled from size-fractionated libraries.</title>
        <authorList>
            <person name="Okazaki N."/>
            <person name="Kikuno R."/>
            <person name="Ohara R."/>
            <person name="Inamoto S."/>
            <person name="Koseki H."/>
            <person name="Hiraoka S."/>
            <person name="Saga Y."/>
            <person name="Seino S."/>
            <person name="Nishimura M."/>
            <person name="Kaisho T."/>
            <person name="Hoshino K."/>
            <person name="Kitamura H."/>
            <person name="Nagase T."/>
            <person name="Ohara O."/>
            <person name="Koga H."/>
        </authorList>
    </citation>
    <scope>NUCLEOTIDE SEQUENCE [LARGE SCALE MRNA] OF 1224-2891 (ISOFORM 2)</scope>
    <source>
        <tissue>Fetal brain</tissue>
    </source>
</reference>
<reference key="4">
    <citation type="journal article" date="2007" name="Proc. Natl. Acad. Sci. U.S.A.">
        <title>Large-scale phosphorylation analysis of mouse liver.</title>
        <authorList>
            <person name="Villen J."/>
            <person name="Beausoleil S.A."/>
            <person name="Gerber S.A."/>
            <person name="Gygi S.P."/>
        </authorList>
    </citation>
    <scope>IDENTIFICATION BY MASS SPECTROMETRY [LARGE SCALE ANALYSIS]</scope>
    <source>
        <tissue>Liver</tissue>
    </source>
</reference>
<reference key="5">
    <citation type="journal article" date="2010" name="Cell">
        <title>A tissue-specific atlas of mouse protein phosphorylation and expression.</title>
        <authorList>
            <person name="Huttlin E.L."/>
            <person name="Jedrychowski M.P."/>
            <person name="Elias J.E."/>
            <person name="Goswami T."/>
            <person name="Rad R."/>
            <person name="Beausoleil S.A."/>
            <person name="Villen J."/>
            <person name="Haas W."/>
            <person name="Sowa M.E."/>
            <person name="Gygi S.P."/>
        </authorList>
    </citation>
    <scope>PHOSPHORYLATION [LARGE SCALE ANALYSIS] AT SER-326; SER-587; SER-945; SER-946; SER-1141; SER-1144; SER-1288; THR-1416; SER-1856; THR-2017; SER-2394 AND SER-2636</scope>
    <scope>IDENTIFICATION BY MASS SPECTROMETRY [LARGE SCALE ANALYSIS]</scope>
    <source>
        <tissue>Brain</tissue>
        <tissue>Brown adipose tissue</tissue>
        <tissue>Heart</tissue>
        <tissue>Kidney</tissue>
        <tissue>Liver</tissue>
        <tissue>Pancreas</tissue>
        <tissue>Testis</tissue>
    </source>
</reference>
<reference key="6">
    <citation type="journal article" date="2014" name="PLoS Biol.">
        <title>Haploinsufficiency of Dmxl2, encoding a synaptic protein, causes infertility associated with a loss of GnRH neurons in mouse.</title>
        <authorList>
            <person name="Tata B."/>
            <person name="Huijbregts L."/>
            <person name="Jacquier S."/>
            <person name="Csaba Z."/>
            <person name="Genin E."/>
            <person name="Meyer V."/>
            <person name="Leka S."/>
            <person name="Dupont J."/>
            <person name="Charles P."/>
            <person name="Chevenne D."/>
            <person name="Carel J.C."/>
            <person name="Leger J."/>
            <person name="de Roux N."/>
        </authorList>
    </citation>
    <scope>FUNCTION</scope>
    <scope>SUBCELLULAR LOCATION</scope>
    <scope>TISSUE SPECIFICITY</scope>
    <scope>DISRUPTION PHENOTYPE</scope>
</reference>
<reference key="7">
    <citation type="journal article" date="2017" name="Genet. Med.">
        <title>A dominant variant in DMXL2 is linked to nonsyndromic hearing loss.</title>
        <authorList>
            <person name="Chen D.Y."/>
            <person name="Liu X.F."/>
            <person name="Lin X.J."/>
            <person name="Zhang D."/>
            <person name="Chai Y.C."/>
            <person name="Yu D.H."/>
            <person name="Sun C.L."/>
            <person name="Wang X.L."/>
            <person name="Zhu W.D."/>
            <person name="Chen Y."/>
            <person name="Sun L.H."/>
            <person name="Wang X.W."/>
            <person name="Shi F.X."/>
            <person name="Huang Z.W."/>
            <person name="Yang T."/>
            <person name="Wu H."/>
        </authorList>
    </citation>
    <scope>TISSUE SPECIFICITY</scope>
</reference>